<protein>
    <recommendedName>
        <fullName evidence="4 5">Cinnamoyl-CoA:phenyllactate CoA-transferase</fullName>
        <ecNumber evidence="2 8">2.8.3.17</ecNumber>
    </recommendedName>
    <alternativeName>
        <fullName>(E)-cinnamoyl-CoA:(R)-phenyllactate CoA-transferase</fullName>
    </alternativeName>
    <alternativeName>
        <fullName evidence="5">(R)-phenyllactate CoA-transferase</fullName>
    </alternativeName>
</protein>
<comment type="function">
    <text evidence="2 3">Component of the phenyllactate dehydratase complex FldABC that is involved in the fermentation of L-phenylalanine via a Stickland reaction. This complex catalyzes the reversible syn-dehydration of (R)-phenyllactate to (E)-cinnamate in two steps, a CoA-transfer from cinnamoyl-CoA to phenyllactate, catalyzed by FldA, followed by the dehydration of phenyllactyl-CoA to cinnamoyl-CoA, catalyzed by FldB and FldC (PubMed:10849007, PubMed:11967068). In vitro, FldA can use 3-phenylpropanoate as a better CoA-acceptor than phenyllactate (PubMed:10849007).</text>
</comment>
<comment type="catalytic activity">
    <reaction evidence="2 8">
        <text>(E)-cinnamoyl-CoA + (R)-3-phenyllactate = (R)-3-phenyllactoyl-CoA + (E)-cinnamate</text>
        <dbReference type="Rhea" id="RHEA:15601"/>
        <dbReference type="ChEBI" id="CHEBI:11009"/>
        <dbReference type="ChEBI" id="CHEBI:15669"/>
        <dbReference type="ChEBI" id="CHEBI:57252"/>
        <dbReference type="ChEBI" id="CHEBI:57254"/>
        <dbReference type="EC" id="2.8.3.17"/>
    </reaction>
</comment>
<comment type="biophysicochemical properties">
    <kinetics>
        <KM evidence="2">3 uM for (E)-cinnamoyl-CoA (at pH 7 and 25 degrees Celsius)</KM>
        <KM evidence="2">9 uM for 3-phenylpropanoate (at pH 7 and 25 degrees Celsius)</KM>
        <Vmax evidence="2">5.3 umol/min/mg enzyme with (E)-cinnamoyl-CoA and 3-phenylpropanoate as substrates (at pH 7 and 25 degrees Celsius)</Vmax>
    </kinetics>
    <phDependence>
        <text evidence="2">Optimum pH is between 7 and 8.</text>
    </phDependence>
    <temperatureDependence>
        <text evidence="2">Optimum temperature is 50 degrees Celsius.</text>
    </temperatureDependence>
</comment>
<comment type="pathway">
    <text evidence="7">Amino-acid degradation; L-phenylalanine degradation.</text>
</comment>
<comment type="subunit">
    <text evidence="2 3">Homodimer (PubMed:10849007). Part of the heterotrimeric phenyllactate dehydratase complex FldABC, composed of (R)-phenyllactate CoA-transferase (FldA) and a heterodimeric (R)-phenyllactyl-CoA dehydratase (FldB and FldC) (PubMed:10849007, PubMed:11967068).</text>
</comment>
<comment type="mass spectrometry"/>
<comment type="similarity">
    <text evidence="6">Belongs to the CoA-transferase III family.</text>
</comment>
<dbReference type="EC" id="2.8.3.17" evidence="2 8"/>
<dbReference type="EMBL" id="AF420489">
    <property type="protein sequence ID" value="AAL18808.1"/>
    <property type="molecule type" value="Genomic_DNA"/>
</dbReference>
<dbReference type="SMR" id="Q93AM1"/>
<dbReference type="KEGG" id="ag:AAL18808"/>
<dbReference type="BioCyc" id="MetaCyc:MONOMER-20598"/>
<dbReference type="SABIO-RK" id="Q93AM1"/>
<dbReference type="UniPathway" id="UPA00139"/>
<dbReference type="GO" id="GO:0043785">
    <property type="term" value="F:cinnamoyl-CoA:phenyllactate CoA-transferase activity"/>
    <property type="evidence" value="ECO:0000314"/>
    <property type="project" value="UniProtKB"/>
</dbReference>
<dbReference type="GO" id="GO:0006559">
    <property type="term" value="P:L-phenylalanine catabolic process"/>
    <property type="evidence" value="ECO:0007669"/>
    <property type="project" value="UniProtKB-UniPathway"/>
</dbReference>
<dbReference type="GO" id="GO:0006558">
    <property type="term" value="P:L-phenylalanine metabolic process"/>
    <property type="evidence" value="ECO:0000314"/>
    <property type="project" value="UniProtKB"/>
</dbReference>
<dbReference type="Gene3D" id="3.40.50.10540">
    <property type="entry name" value="Crotonobetainyl-coa:carnitine coa-transferase, domain 1"/>
    <property type="match status" value="1"/>
</dbReference>
<dbReference type="Gene3D" id="3.30.1540.10">
    <property type="entry name" value="formyl-coa transferase, domain 3"/>
    <property type="match status" value="1"/>
</dbReference>
<dbReference type="InterPro" id="IPR050509">
    <property type="entry name" value="CoA-transferase_III"/>
</dbReference>
<dbReference type="InterPro" id="IPR003673">
    <property type="entry name" value="CoA-Trfase_fam_III"/>
</dbReference>
<dbReference type="InterPro" id="IPR044855">
    <property type="entry name" value="CoA-Trfase_III_dom3_sf"/>
</dbReference>
<dbReference type="InterPro" id="IPR023606">
    <property type="entry name" value="CoA-Trfase_III_dom_1_sf"/>
</dbReference>
<dbReference type="PANTHER" id="PTHR48228:SF2">
    <property type="entry name" value="E-CINNAMOYL-COA:R-PHENYLLACTATE COA TRANSFERASE LARGE SUBUNIT"/>
    <property type="match status" value="1"/>
</dbReference>
<dbReference type="PANTHER" id="PTHR48228">
    <property type="entry name" value="SUCCINYL-COA--D-CITRAMALATE COA-TRANSFERASE"/>
    <property type="match status" value="1"/>
</dbReference>
<dbReference type="Pfam" id="PF02515">
    <property type="entry name" value="CoA_transf_3"/>
    <property type="match status" value="1"/>
</dbReference>
<dbReference type="SUPFAM" id="SSF89796">
    <property type="entry name" value="CoA-transferase family III (CaiB/BaiF)"/>
    <property type="match status" value="1"/>
</dbReference>
<evidence type="ECO:0000250" key="1"/>
<evidence type="ECO:0000269" key="2">
    <source>
    </source>
</evidence>
<evidence type="ECO:0000269" key="3">
    <source>
    </source>
</evidence>
<evidence type="ECO:0000303" key="4">
    <source>
    </source>
</evidence>
<evidence type="ECO:0000303" key="5">
    <source>
    </source>
</evidence>
<evidence type="ECO:0000305" key="6"/>
<evidence type="ECO:0000305" key="7">
    <source>
    </source>
</evidence>
<evidence type="ECO:0000305" key="8">
    <source>
    </source>
</evidence>
<organism>
    <name type="scientific">Clostridium sporogenes</name>
    <dbReference type="NCBI Taxonomy" id="1509"/>
    <lineage>
        <taxon>Bacteria</taxon>
        <taxon>Bacillati</taxon>
        <taxon>Bacillota</taxon>
        <taxon>Clostridia</taxon>
        <taxon>Eubacteriales</taxon>
        <taxon>Clostridiaceae</taxon>
        <taxon>Clostridium</taxon>
    </lineage>
</organism>
<sequence>MENNTNMFSGVKVIELANFIAAPAAGRFFADGGAEVIKIESPAGDPLRYTAPSEGRPLSQEENTTYDLENANKKAIVLNLKSEKGKKILHEMLAEADILLTNWRTKALVKQGLDYETLKEKYPKLVFAQITGYGEKGPDKDLPGFDYTAFFARGGVSGTLYEKGTVPPNVVPGLGDHQAGMFLAAGMAGALYKAKTTGQGDKVTVSLMHSAMYGLGIMIQAAQYKDHGLVYPINRNETPNPFIVSYKSKDDYFVQVCMPPYDVFYDRFMTALGREDLVGDERYNKIENLKDGRAKEVYSIIEQQMVTKTKDEWDNIFRDADIPFAIAQTWEDLLEDEQAWANDYLYKMKYPTGNERALVRLPVFFKEAGLPEYNQSPQIAENTVEVLKEMGYTEQEIEELEKDKDIMVRKEK</sequence>
<reference key="1">
    <citation type="journal article" date="2002" name="Mol. Microbiol.">
        <title>Molecular characterization of phenyllactate dehydratase and its initiator from Clostridium sporogenes.</title>
        <authorList>
            <person name="Dickert S."/>
            <person name="Pierik A.J."/>
            <person name="Buckel W."/>
        </authorList>
    </citation>
    <scope>NUCLEOTIDE SEQUENCE [GENOMIC DNA]</scope>
    <scope>FUNCTION</scope>
    <scope>CATALYTIC ACTIVITY</scope>
    <scope>SUBUNIT</scope>
    <source>
        <strain>ATCC 3584</strain>
    </source>
</reference>
<reference key="2">
    <citation type="journal article" date="2000" name="Eur. J. Biochem.">
        <title>The involvement of coenzyme A esters in the dehydration of (R)-phenyllactate to (E)-cinnamate by Clostridium sporogenes.</title>
        <authorList>
            <person name="Dickert S."/>
            <person name="Pierik A.J."/>
            <person name="Linder D."/>
            <person name="Buckel W."/>
        </authorList>
    </citation>
    <scope>PROTEIN SEQUENCE OF 1-39</scope>
    <scope>FUNCTION</scope>
    <scope>CATALYTIC ACTIVITY</scope>
    <scope>BIOPHYSICOCHEMICAL PROPERTIES</scope>
    <scope>MASS SPECTROMETRY</scope>
    <scope>SUBSTRATE SPECIFICITY</scope>
    <scope>SUBUNIT</scope>
    <scope>PATHWAY</scope>
    <source>
        <strain>ATCC 3584</strain>
    </source>
</reference>
<gene>
    <name evidence="4 5" type="primary">fldA</name>
</gene>
<proteinExistence type="evidence at protein level"/>
<feature type="chain" id="PRO_0000422996" description="Cinnamoyl-CoA:phenyllactate CoA-transferase">
    <location>
        <begin position="1"/>
        <end position="412"/>
    </location>
</feature>
<feature type="active site" description="Nucleophile" evidence="1">
    <location>
        <position position="176"/>
    </location>
</feature>
<feature type="binding site" evidence="1">
    <location>
        <position position="102"/>
    </location>
    <ligand>
        <name>CoA</name>
        <dbReference type="ChEBI" id="CHEBI:57287"/>
    </ligand>
</feature>
<name>FLDA_CLOSG</name>
<keyword id="KW-0903">Direct protein sequencing</keyword>
<keyword id="KW-0808">Transferase</keyword>
<accession>Q93AM1</accession>